<sequence length="333" mass="36129">MPLGLGRRKKAPPLVENEEAEPSRSGLGVGEPGPLGGSAAGESQMGLPPPPAALRPRLVFHTQLAHGSPTGRIEGFTNVKELYGKIAEAFRLPAAEVMFCTLNTHKVDMDKLLGGQIGLEDFIFAHVKGQRKEVEVFKSEEALGLTITDNGAGYAFIKRIKEGSVIDHIQLISVGDMIEAINGQSLLGCRHYEVARLLKELPRGRTFTLKLTEPRKAFDMISQRSAGGHPGSGPQLGTGRGTLRLRSRGPATVEDLPSAFEEKAIEKVDDLLESYMGIRDTELAATMVELGKDKRNPDELAEALDERLGDFAFPDEFVFDVWGAIGDAKVGRY</sequence>
<evidence type="ECO:0000250" key="1"/>
<evidence type="ECO:0000250" key="2">
    <source>
        <dbReference type="UniProtKB" id="O14908"/>
    </source>
</evidence>
<evidence type="ECO:0000255" key="3">
    <source>
        <dbReference type="PROSITE-ProRule" id="PRU00143"/>
    </source>
</evidence>
<evidence type="ECO:0000256" key="4">
    <source>
        <dbReference type="SAM" id="MobiDB-lite"/>
    </source>
</evidence>
<evidence type="ECO:0000269" key="5">
    <source>
    </source>
</evidence>
<evidence type="ECO:0000269" key="6">
    <source>
    </source>
</evidence>
<evidence type="ECO:0000269" key="7">
    <source>
    </source>
</evidence>
<evidence type="ECO:0000269" key="8">
    <source>
    </source>
</evidence>
<evidence type="ECO:0000305" key="9"/>
<evidence type="ECO:0007829" key="10">
    <source>
        <dbReference type="PDB" id="5V6B"/>
    </source>
</evidence>
<dbReference type="EMBL" id="AF089818">
    <property type="protein sequence ID" value="AAC67550.1"/>
    <property type="molecule type" value="mRNA"/>
</dbReference>
<dbReference type="EMBL" id="AF104358">
    <property type="protein sequence ID" value="AAD12262.1"/>
    <property type="molecule type" value="mRNA"/>
</dbReference>
<dbReference type="EMBL" id="AF061263">
    <property type="protein sequence ID" value="AAC72311.1"/>
    <property type="molecule type" value="mRNA"/>
</dbReference>
<dbReference type="EMBL" id="AK086506">
    <property type="protein sequence ID" value="BAC39680.1"/>
    <property type="molecule type" value="mRNA"/>
</dbReference>
<dbReference type="EMBL" id="BC003490">
    <property type="protein sequence ID" value="AAH03490.1"/>
    <property type="molecule type" value="mRNA"/>
</dbReference>
<dbReference type="CCDS" id="CCDS22457.1"/>
<dbReference type="RefSeq" id="NP_061241.1">
    <property type="nucleotide sequence ID" value="NM_018771.3"/>
</dbReference>
<dbReference type="RefSeq" id="XP_030099599.1">
    <property type="nucleotide sequence ID" value="XM_030243739.2"/>
</dbReference>
<dbReference type="PDB" id="5V6B">
    <property type="method" value="X-ray"/>
    <property type="resolution" value="1.90 A"/>
    <property type="chains" value="A/B=52-327"/>
</dbReference>
<dbReference type="PDB" id="5V6E">
    <property type="method" value="X-ray"/>
    <property type="resolution" value="3.51 A"/>
    <property type="chains" value="A/C/E/G/I=258-333"/>
</dbReference>
<dbReference type="PDB" id="5V6T">
    <property type="method" value="X-ray"/>
    <property type="resolution" value="3.19 A"/>
    <property type="chains" value="B=52-333"/>
</dbReference>
<dbReference type="PDB" id="7NRN">
    <property type="method" value="NMR"/>
    <property type="chains" value="A=255-333"/>
</dbReference>
<dbReference type="PDBsum" id="5V6B"/>
<dbReference type="PDBsum" id="5V6E"/>
<dbReference type="PDBsum" id="5V6T"/>
<dbReference type="PDBsum" id="7NRN"/>
<dbReference type="SMR" id="Q9Z0G0"/>
<dbReference type="BioGRID" id="212526">
    <property type="interactions" value="9"/>
</dbReference>
<dbReference type="CORUM" id="Q9Z0G0"/>
<dbReference type="DIP" id="DIP-33281N"/>
<dbReference type="ELM" id="Q9Z0G0"/>
<dbReference type="FunCoup" id="Q9Z0G0">
    <property type="interactions" value="1941"/>
</dbReference>
<dbReference type="IntAct" id="Q9Z0G0">
    <property type="interactions" value="6"/>
</dbReference>
<dbReference type="MINT" id="Q9Z0G0"/>
<dbReference type="STRING" id="10090.ENSMUSP00000019577"/>
<dbReference type="iPTMnet" id="Q9Z0G0"/>
<dbReference type="PhosphoSitePlus" id="Q9Z0G0"/>
<dbReference type="jPOST" id="Q9Z0G0"/>
<dbReference type="PaxDb" id="10090-ENSMUSP00000019577"/>
<dbReference type="PeptideAtlas" id="Q9Z0G0"/>
<dbReference type="ProteomicsDB" id="268880"/>
<dbReference type="Pumba" id="Q9Z0G0"/>
<dbReference type="Antibodypedia" id="13703">
    <property type="antibodies" value="306 antibodies from 33 providers"/>
</dbReference>
<dbReference type="DNASU" id="67903"/>
<dbReference type="Ensembl" id="ENSMUST00000019577.10">
    <property type="protein sequence ID" value="ENSMUSP00000019577.9"/>
    <property type="gene ID" value="ENSMUSG00000019433.10"/>
</dbReference>
<dbReference type="GeneID" id="67903"/>
<dbReference type="KEGG" id="mmu:67903"/>
<dbReference type="UCSC" id="uc009mkr.1">
    <property type="organism name" value="mouse"/>
</dbReference>
<dbReference type="AGR" id="MGI:1926252"/>
<dbReference type="CTD" id="10755"/>
<dbReference type="MGI" id="MGI:1926252">
    <property type="gene designation" value="Gipc1"/>
</dbReference>
<dbReference type="VEuPathDB" id="HostDB:ENSMUSG00000019433"/>
<dbReference type="eggNOG" id="KOG3938">
    <property type="taxonomic scope" value="Eukaryota"/>
</dbReference>
<dbReference type="GeneTree" id="ENSGT00390000003420"/>
<dbReference type="HOGENOM" id="CLU_044527_1_0_1"/>
<dbReference type="InParanoid" id="Q9Z0G0"/>
<dbReference type="OMA" id="GFANIGP"/>
<dbReference type="OrthoDB" id="6509831at2759"/>
<dbReference type="PhylomeDB" id="Q9Z0G0"/>
<dbReference type="TreeFam" id="TF313878"/>
<dbReference type="Reactome" id="R-MMU-190370">
    <property type="pathway name" value="FGFR1b ligand binding and activation"/>
</dbReference>
<dbReference type="Reactome" id="R-MMU-190373">
    <property type="pathway name" value="FGFR1c ligand binding and activation"/>
</dbReference>
<dbReference type="Reactome" id="R-MMU-9839389">
    <property type="pathway name" value="TGFBR3 regulates TGF-beta signaling"/>
</dbReference>
<dbReference type="Reactome" id="R-MMU-9839397">
    <property type="pathway name" value="TGFBR3 regulates FGF2 signaling"/>
</dbReference>
<dbReference type="BioGRID-ORCS" id="67903">
    <property type="hits" value="6 hits in 79 CRISPR screens"/>
</dbReference>
<dbReference type="CD-CODE" id="CE726F99">
    <property type="entry name" value="Postsynaptic density"/>
</dbReference>
<dbReference type="ChiTaRS" id="Gipc1">
    <property type="organism name" value="mouse"/>
</dbReference>
<dbReference type="PRO" id="PR:Q9Z0G0"/>
<dbReference type="Proteomes" id="UP000000589">
    <property type="component" value="Chromosome 8"/>
</dbReference>
<dbReference type="RNAct" id="Q9Z0G0">
    <property type="molecule type" value="protein"/>
</dbReference>
<dbReference type="Bgee" id="ENSMUSG00000019433">
    <property type="expression patterns" value="Expressed in lip and 256 other cell types or tissues"/>
</dbReference>
<dbReference type="ExpressionAtlas" id="Q9Z0G0">
    <property type="expression patterns" value="baseline and differential"/>
</dbReference>
<dbReference type="GO" id="GO:0005938">
    <property type="term" value="C:cell cortex"/>
    <property type="evidence" value="ECO:0007669"/>
    <property type="project" value="Ensembl"/>
</dbReference>
<dbReference type="GO" id="GO:0005737">
    <property type="term" value="C:cytoplasm"/>
    <property type="evidence" value="ECO:0000314"/>
    <property type="project" value="MGI"/>
</dbReference>
<dbReference type="GO" id="GO:0005829">
    <property type="term" value="C:cytosol"/>
    <property type="evidence" value="ECO:0000314"/>
    <property type="project" value="MGI"/>
</dbReference>
<dbReference type="GO" id="GO:0043198">
    <property type="term" value="C:dendritic shaft"/>
    <property type="evidence" value="ECO:0000314"/>
    <property type="project" value="MGI"/>
</dbReference>
<dbReference type="GO" id="GO:0043197">
    <property type="term" value="C:dendritic spine"/>
    <property type="evidence" value="ECO:0000314"/>
    <property type="project" value="MGI"/>
</dbReference>
<dbReference type="GO" id="GO:0098978">
    <property type="term" value="C:glutamatergic synapse"/>
    <property type="evidence" value="ECO:0000314"/>
    <property type="project" value="SynGO"/>
</dbReference>
<dbReference type="GO" id="GO:0016020">
    <property type="term" value="C:membrane"/>
    <property type="evidence" value="ECO:0000314"/>
    <property type="project" value="MGI"/>
</dbReference>
<dbReference type="GO" id="GO:0098685">
    <property type="term" value="C:Schaffer collateral - CA1 synapse"/>
    <property type="evidence" value="ECO:0000314"/>
    <property type="project" value="SynGO"/>
</dbReference>
<dbReference type="GO" id="GO:0008021">
    <property type="term" value="C:synaptic vesicle"/>
    <property type="evidence" value="ECO:0000314"/>
    <property type="project" value="MGI"/>
</dbReference>
<dbReference type="GO" id="GO:0012506">
    <property type="term" value="C:vesicle membrane"/>
    <property type="evidence" value="ECO:0000314"/>
    <property type="project" value="MGI"/>
</dbReference>
<dbReference type="GO" id="GO:0003779">
    <property type="term" value="F:actin binding"/>
    <property type="evidence" value="ECO:0000353"/>
    <property type="project" value="MGI"/>
</dbReference>
<dbReference type="GO" id="GO:0005096">
    <property type="term" value="F:GTPase activator activity"/>
    <property type="evidence" value="ECO:0000304"/>
    <property type="project" value="MGI"/>
</dbReference>
<dbReference type="GO" id="GO:0042802">
    <property type="term" value="F:identical protein binding"/>
    <property type="evidence" value="ECO:0000353"/>
    <property type="project" value="MGI"/>
</dbReference>
<dbReference type="GO" id="GO:0017022">
    <property type="term" value="F:myosin binding"/>
    <property type="evidence" value="ECO:0000353"/>
    <property type="project" value="MGI"/>
</dbReference>
<dbReference type="GO" id="GO:0005102">
    <property type="term" value="F:signaling receptor binding"/>
    <property type="evidence" value="ECO:0007669"/>
    <property type="project" value="Ensembl"/>
</dbReference>
<dbReference type="GO" id="GO:0098761">
    <property type="term" value="P:cellular response to interleukin-7"/>
    <property type="evidence" value="ECO:0000314"/>
    <property type="project" value="MGI"/>
</dbReference>
<dbReference type="GO" id="GO:0007268">
    <property type="term" value="P:chemical synaptic transmission"/>
    <property type="evidence" value="ECO:0000315"/>
    <property type="project" value="MGI"/>
</dbReference>
<dbReference type="GO" id="GO:0043542">
    <property type="term" value="P:endothelial cell migration"/>
    <property type="evidence" value="ECO:0000315"/>
    <property type="project" value="MGI"/>
</dbReference>
<dbReference type="GO" id="GO:0007186">
    <property type="term" value="P:G protein-coupled receptor signaling pathway"/>
    <property type="evidence" value="ECO:0000304"/>
    <property type="project" value="MGI"/>
</dbReference>
<dbReference type="GO" id="GO:0014047">
    <property type="term" value="P:glutamate secretion"/>
    <property type="evidence" value="ECO:0000315"/>
    <property type="project" value="MGI"/>
</dbReference>
<dbReference type="GO" id="GO:0032435">
    <property type="term" value="P:negative regulation of proteasomal ubiquitin-dependent protein catabolic process"/>
    <property type="evidence" value="ECO:0000314"/>
    <property type="project" value="BHF-UCL"/>
</dbReference>
<dbReference type="GO" id="GO:0032467">
    <property type="term" value="P:positive regulation of cytokinesis"/>
    <property type="evidence" value="ECO:0007669"/>
    <property type="project" value="Ensembl"/>
</dbReference>
<dbReference type="GO" id="GO:0048023">
    <property type="term" value="P:positive regulation of melanin biosynthetic process"/>
    <property type="evidence" value="ECO:0000250"/>
    <property type="project" value="UniProtKB"/>
</dbReference>
<dbReference type="GO" id="GO:0030511">
    <property type="term" value="P:positive regulation of transforming growth factor beta receptor signaling pathway"/>
    <property type="evidence" value="ECO:0000314"/>
    <property type="project" value="BHF-UCL"/>
</dbReference>
<dbReference type="GO" id="GO:0099171">
    <property type="term" value="P:presynaptic modulation of chemical synaptic transmission"/>
    <property type="evidence" value="ECO:0000314"/>
    <property type="project" value="SynGO"/>
</dbReference>
<dbReference type="GO" id="GO:0006605">
    <property type="term" value="P:protein targeting"/>
    <property type="evidence" value="ECO:0000315"/>
    <property type="project" value="MGI"/>
</dbReference>
<dbReference type="GO" id="GO:0031647">
    <property type="term" value="P:regulation of protein stability"/>
    <property type="evidence" value="ECO:0000314"/>
    <property type="project" value="BHF-UCL"/>
</dbReference>
<dbReference type="GO" id="GO:0048167">
    <property type="term" value="P:regulation of synaptic plasticity"/>
    <property type="evidence" value="ECO:0000315"/>
    <property type="project" value="MGI"/>
</dbReference>
<dbReference type="CDD" id="cd21180">
    <property type="entry name" value="GH2_GIPC"/>
    <property type="match status" value="1"/>
</dbReference>
<dbReference type="CDD" id="cd23077">
    <property type="entry name" value="PDZ_GIPC1"/>
    <property type="match status" value="1"/>
</dbReference>
<dbReference type="FunFam" id="2.30.42.10:FF:000097">
    <property type="entry name" value="PDZ domain-containing protein GIPC1 isoform 1"/>
    <property type="match status" value="1"/>
</dbReference>
<dbReference type="Gene3D" id="2.30.42.10">
    <property type="match status" value="1"/>
</dbReference>
<dbReference type="InterPro" id="IPR055349">
    <property type="entry name" value="GH2_GIPC"/>
</dbReference>
<dbReference type="InterPro" id="IPR056814">
    <property type="entry name" value="GIPC1-3_GH1"/>
</dbReference>
<dbReference type="InterPro" id="IPR017379">
    <property type="entry name" value="GIPC1/2/3"/>
</dbReference>
<dbReference type="InterPro" id="IPR001478">
    <property type="entry name" value="PDZ"/>
</dbReference>
<dbReference type="InterPro" id="IPR036034">
    <property type="entry name" value="PDZ_sf"/>
</dbReference>
<dbReference type="PANTHER" id="PTHR12259:SF4">
    <property type="entry name" value="PDZ DOMAIN-CONTAINING PROTEIN GIPC1"/>
    <property type="match status" value="1"/>
</dbReference>
<dbReference type="PANTHER" id="PTHR12259">
    <property type="entry name" value="RGS-GAIP INTERACTING PROTEIN GIPC"/>
    <property type="match status" value="1"/>
</dbReference>
<dbReference type="Pfam" id="PF25083">
    <property type="entry name" value="GIPC1_GH1"/>
    <property type="match status" value="1"/>
</dbReference>
<dbReference type="Pfam" id="PF25082">
    <property type="entry name" value="GIPC1_GH2"/>
    <property type="match status" value="1"/>
</dbReference>
<dbReference type="Pfam" id="PF00595">
    <property type="entry name" value="PDZ"/>
    <property type="match status" value="1"/>
</dbReference>
<dbReference type="PIRSF" id="PIRSF038083">
    <property type="entry name" value="UCP038083_GIPC"/>
    <property type="match status" value="1"/>
</dbReference>
<dbReference type="SMART" id="SM00228">
    <property type="entry name" value="PDZ"/>
    <property type="match status" value="1"/>
</dbReference>
<dbReference type="SUPFAM" id="SSF50156">
    <property type="entry name" value="PDZ domain-like"/>
    <property type="match status" value="1"/>
</dbReference>
<dbReference type="PROSITE" id="PS50106">
    <property type="entry name" value="PDZ"/>
    <property type="match status" value="1"/>
</dbReference>
<feature type="chain" id="PRO_0000087493" description="PDZ domain-containing protein GIPC1">
    <location>
        <begin position="1"/>
        <end position="333"/>
    </location>
</feature>
<feature type="domain" description="PDZ" evidence="3">
    <location>
        <begin position="133"/>
        <end position="213"/>
    </location>
</feature>
<feature type="region of interest" description="Disordered" evidence="4">
    <location>
        <begin position="1"/>
        <end position="53"/>
    </location>
</feature>
<feature type="region of interest" description="Disordered" evidence="4">
    <location>
        <begin position="223"/>
        <end position="244"/>
    </location>
</feature>
<feature type="compositionally biased region" description="Basic residues" evidence="4">
    <location>
        <begin position="1"/>
        <end position="11"/>
    </location>
</feature>
<feature type="compositionally biased region" description="Gly residues" evidence="4">
    <location>
        <begin position="27"/>
        <end position="39"/>
    </location>
</feature>
<feature type="compositionally biased region" description="Gly residues" evidence="4">
    <location>
        <begin position="228"/>
        <end position="240"/>
    </location>
</feature>
<feature type="modified residue" description="Phosphoserine" evidence="2">
    <location>
        <position position="68"/>
    </location>
</feature>
<feature type="modified residue" description="Phosphoserine" evidence="2">
    <location>
        <position position="222"/>
    </location>
</feature>
<feature type="modified residue" description="Phosphoserine" evidence="2">
    <location>
        <position position="225"/>
    </location>
</feature>
<feature type="modified residue" description="Phosphoserine" evidence="2">
    <location>
        <position position="232"/>
    </location>
</feature>
<feature type="modified residue" description="Phosphothreonine" evidence="2">
    <location>
        <position position="242"/>
    </location>
</feature>
<feature type="modified residue" description="Phosphoserine" evidence="2">
    <location>
        <position position="247"/>
    </location>
</feature>
<feature type="sequence conflict" description="In Ref. 1; AAC67550." evidence="9" ref="1">
    <original>A</original>
    <variation>G</variation>
    <location>
        <position position="39"/>
    </location>
</feature>
<feature type="sequence conflict" description="In Ref. 1; AAC67550." evidence="9" ref="1">
    <original>A</original>
    <variation>S</variation>
    <location>
        <position position="53"/>
    </location>
</feature>
<feature type="sequence conflict" description="In Ref. 1; AAC67550." evidence="9" ref="1">
    <original>E</original>
    <variation>D</variation>
    <location>
        <position position="141"/>
    </location>
</feature>
<feature type="sequence conflict" description="In Ref. 1; AAC67550." evidence="9" ref="1">
    <original>A</original>
    <variation>S</variation>
    <location>
        <position position="226"/>
    </location>
</feature>
<feature type="strand" evidence="10">
    <location>
        <begin position="60"/>
        <end position="64"/>
    </location>
</feature>
<feature type="strand" evidence="10">
    <location>
        <begin position="71"/>
        <end position="73"/>
    </location>
</feature>
<feature type="helix" evidence="10">
    <location>
        <begin position="79"/>
        <end position="89"/>
    </location>
</feature>
<feature type="helix" evidence="10">
    <location>
        <begin position="94"/>
        <end position="96"/>
    </location>
</feature>
<feature type="strand" evidence="10">
    <location>
        <begin position="97"/>
        <end position="103"/>
    </location>
</feature>
<feature type="helix" evidence="10">
    <location>
        <begin position="109"/>
        <end position="111"/>
    </location>
</feature>
<feature type="strand" evidence="10">
    <location>
        <begin position="115"/>
        <end position="118"/>
    </location>
</feature>
<feature type="strand" evidence="10">
    <location>
        <begin position="123"/>
        <end position="137"/>
    </location>
</feature>
<feature type="strand" evidence="10">
    <location>
        <begin position="145"/>
        <end position="149"/>
    </location>
</feature>
<feature type="strand" evidence="10">
    <location>
        <begin position="151"/>
        <end position="153"/>
    </location>
</feature>
<feature type="strand" evidence="10">
    <location>
        <begin position="155"/>
        <end position="160"/>
    </location>
</feature>
<feature type="turn" evidence="10">
    <location>
        <begin position="165"/>
        <end position="168"/>
    </location>
</feature>
<feature type="strand" evidence="10">
    <location>
        <begin position="177"/>
        <end position="181"/>
    </location>
</feature>
<feature type="helix" evidence="10">
    <location>
        <begin position="191"/>
        <end position="199"/>
    </location>
</feature>
<feature type="strand" evidence="10">
    <location>
        <begin position="206"/>
        <end position="214"/>
    </location>
</feature>
<feature type="strand" evidence="10">
    <location>
        <begin position="241"/>
        <end position="245"/>
    </location>
</feature>
<feature type="strand" evidence="10">
    <location>
        <begin position="247"/>
        <end position="249"/>
    </location>
</feature>
<feature type="strand" evidence="10">
    <location>
        <begin position="251"/>
        <end position="255"/>
    </location>
</feature>
<feature type="helix" evidence="10">
    <location>
        <begin position="259"/>
        <end position="276"/>
    </location>
</feature>
<feature type="helix" evidence="10">
    <location>
        <begin position="281"/>
        <end position="291"/>
    </location>
</feature>
<feature type="helix" evidence="10">
    <location>
        <begin position="297"/>
        <end position="308"/>
    </location>
</feature>
<feature type="turn" evidence="10">
    <location>
        <begin position="309"/>
        <end position="311"/>
    </location>
</feature>
<feature type="helix" evidence="10">
    <location>
        <begin position="315"/>
        <end position="324"/>
    </location>
</feature>
<organism>
    <name type="scientific">Mus musculus</name>
    <name type="common">Mouse</name>
    <dbReference type="NCBI Taxonomy" id="10090"/>
    <lineage>
        <taxon>Eukaryota</taxon>
        <taxon>Metazoa</taxon>
        <taxon>Chordata</taxon>
        <taxon>Craniata</taxon>
        <taxon>Vertebrata</taxon>
        <taxon>Euteleostomi</taxon>
        <taxon>Mammalia</taxon>
        <taxon>Eutheria</taxon>
        <taxon>Euarchontoglires</taxon>
        <taxon>Glires</taxon>
        <taxon>Rodentia</taxon>
        <taxon>Myomorpha</taxon>
        <taxon>Muroidea</taxon>
        <taxon>Muridae</taxon>
        <taxon>Murinae</taxon>
        <taxon>Mus</taxon>
        <taxon>Mus</taxon>
    </lineage>
</organism>
<name>GIPC1_MOUSE</name>
<protein>
    <recommendedName>
        <fullName>PDZ domain-containing protein GIPC1</fullName>
    </recommendedName>
    <alternativeName>
        <fullName>GAIP C-terminus-interacting protein</fullName>
    </alternativeName>
    <alternativeName>
        <fullName>RGS-GAIP-interacting protein</fullName>
    </alternativeName>
    <alternativeName>
        <fullName>RGS19-interacting protein 1</fullName>
    </alternativeName>
    <alternativeName>
        <fullName>SemaF cytoplasmic domain-associated protein 1</fullName>
        <shortName>SEMCAP-1</shortName>
    </alternativeName>
    <alternativeName>
        <fullName>Synectin</fullName>
    </alternativeName>
</protein>
<proteinExistence type="evidence at protein level"/>
<comment type="function">
    <text evidence="1">Inhibits endothelial cell migration (in vitro). May be involved in G protein-linked signaling (By similarity).</text>
</comment>
<comment type="subunit">
    <text evidence="1 5 6 8">Interacts with GLUT1 (C-terminus), ACTN1, KIF1B, MYO6 and PLEKHG5 (By similarity). Interacts with RGS19 C-terminus. Interacts with SDC4/syndecan-4 and SEMA4C/semaphorin-4C.</text>
</comment>
<comment type="interaction">
    <interactant intactId="EBI-300855">
        <id>Q9Z0G0</id>
    </interactant>
    <interactant intactId="EBI-300875">
        <id>A2ARV4</id>
        <label>Lrp2</label>
    </interactant>
    <organismsDiffer>false</organismsDiffer>
    <experiments>2</experiments>
</comment>
<comment type="interaction">
    <interactant intactId="EBI-300855">
        <id>Q9Z0G0</id>
    </interactant>
    <interactant intactId="EBI-987075">
        <id>Q64151</id>
        <label>Sema4c</label>
    </interactant>
    <organismsDiffer>false</organismsDiffer>
    <experiments>8</experiments>
</comment>
<comment type="interaction">
    <interactant intactId="EBI-300855">
        <id>Q9Z0G0</id>
    </interactant>
    <interactant intactId="EBI-350606">
        <id>Q9UM54</id>
        <label>MYO6</label>
    </interactant>
    <organismsDiffer>true</organismsDiffer>
    <experiments>4</experiments>
</comment>
<comment type="subcellular location">
    <subcellularLocation>
        <location evidence="2">Cytoplasm</location>
    </subcellularLocation>
    <subcellularLocation>
        <location evidence="2">Membrane</location>
        <topology evidence="1">Peripheral membrane protein</topology>
    </subcellularLocation>
</comment>
<comment type="tissue specificity">
    <text evidence="7">Widely expressed.</text>
</comment>
<comment type="developmental stage">
    <text evidence="7">Detected already at 4.5 dpc, expression peaks at 11.5-12.5 dpc and gradually declines to its adult levels by 18.5 dpc.</text>
</comment>
<comment type="similarity">
    <text evidence="9">Belongs to the GIPC family.</text>
</comment>
<accession>Q9Z0G0</accession>
<gene>
    <name type="primary">Gipc1</name>
    <name type="synonym">Gipc</name>
    <name type="synonym">Rgs19ip1</name>
    <name type="synonym">Semcap1</name>
</gene>
<reference key="1">
    <citation type="journal article" date="1998" name="Proc. Natl. Acad. Sci. U.S.A.">
        <title>GIPC, a PDZ domain containing protein, interacts specifically with the C-terminus of RGS-GAIP.</title>
        <authorList>
            <person name="De Vries L."/>
            <person name="Lou X."/>
            <person name="Zhao G."/>
            <person name="Zheng B."/>
            <person name="Farquhar M.G."/>
        </authorList>
    </citation>
    <scope>NUCLEOTIDE SEQUENCE [MRNA]</scope>
    <scope>INTERACTION WITH RGS19</scope>
</reference>
<reference key="2">
    <citation type="journal article" date="1999" name="J. Biol. Chem.">
        <title>A PDZ protein regulates the distribution of the transmembrane semaphorin, M-SemF.</title>
        <authorList>
            <person name="Wang L.-H."/>
            <person name="Kalb R.G."/>
            <person name="Strittmatter S.M."/>
        </authorList>
    </citation>
    <scope>NUCLEOTIDE SEQUENCE [MRNA]</scope>
    <scope>INTERACTION WITH SEM4C</scope>
</reference>
<reference key="3">
    <citation type="journal article" date="2000" name="J. Cell. Physiol.">
        <title>Synectin, syndecan-4 cytoplasmic domain binding PDZ protein, inhibits cell migration.</title>
        <authorList>
            <person name="Gao Y."/>
            <person name="Li M."/>
            <person name="Chen W."/>
            <person name="Simons M."/>
        </authorList>
    </citation>
    <scope>NUCLEOTIDE SEQUENCE [MRNA]</scope>
    <scope>INTERACTION WITH SDC4</scope>
</reference>
<reference key="4">
    <citation type="journal article" date="2005" name="Science">
        <title>The transcriptional landscape of the mammalian genome.</title>
        <authorList>
            <person name="Carninci P."/>
            <person name="Kasukawa T."/>
            <person name="Katayama S."/>
            <person name="Gough J."/>
            <person name="Frith M.C."/>
            <person name="Maeda N."/>
            <person name="Oyama R."/>
            <person name="Ravasi T."/>
            <person name="Lenhard B."/>
            <person name="Wells C."/>
            <person name="Kodzius R."/>
            <person name="Shimokawa K."/>
            <person name="Bajic V.B."/>
            <person name="Brenner S.E."/>
            <person name="Batalov S."/>
            <person name="Forrest A.R."/>
            <person name="Zavolan M."/>
            <person name="Davis M.J."/>
            <person name="Wilming L.G."/>
            <person name="Aidinis V."/>
            <person name="Allen J.E."/>
            <person name="Ambesi-Impiombato A."/>
            <person name="Apweiler R."/>
            <person name="Aturaliya R.N."/>
            <person name="Bailey T.L."/>
            <person name="Bansal M."/>
            <person name="Baxter L."/>
            <person name="Beisel K.W."/>
            <person name="Bersano T."/>
            <person name="Bono H."/>
            <person name="Chalk A.M."/>
            <person name="Chiu K.P."/>
            <person name="Choudhary V."/>
            <person name="Christoffels A."/>
            <person name="Clutterbuck D.R."/>
            <person name="Crowe M.L."/>
            <person name="Dalla E."/>
            <person name="Dalrymple B.P."/>
            <person name="de Bono B."/>
            <person name="Della Gatta G."/>
            <person name="di Bernardo D."/>
            <person name="Down T."/>
            <person name="Engstrom P."/>
            <person name="Fagiolini M."/>
            <person name="Faulkner G."/>
            <person name="Fletcher C.F."/>
            <person name="Fukushima T."/>
            <person name="Furuno M."/>
            <person name="Futaki S."/>
            <person name="Gariboldi M."/>
            <person name="Georgii-Hemming P."/>
            <person name="Gingeras T.R."/>
            <person name="Gojobori T."/>
            <person name="Green R.E."/>
            <person name="Gustincich S."/>
            <person name="Harbers M."/>
            <person name="Hayashi Y."/>
            <person name="Hensch T.K."/>
            <person name="Hirokawa N."/>
            <person name="Hill D."/>
            <person name="Huminiecki L."/>
            <person name="Iacono M."/>
            <person name="Ikeo K."/>
            <person name="Iwama A."/>
            <person name="Ishikawa T."/>
            <person name="Jakt M."/>
            <person name="Kanapin A."/>
            <person name="Katoh M."/>
            <person name="Kawasawa Y."/>
            <person name="Kelso J."/>
            <person name="Kitamura H."/>
            <person name="Kitano H."/>
            <person name="Kollias G."/>
            <person name="Krishnan S.P."/>
            <person name="Kruger A."/>
            <person name="Kummerfeld S.K."/>
            <person name="Kurochkin I.V."/>
            <person name="Lareau L.F."/>
            <person name="Lazarevic D."/>
            <person name="Lipovich L."/>
            <person name="Liu J."/>
            <person name="Liuni S."/>
            <person name="McWilliam S."/>
            <person name="Madan Babu M."/>
            <person name="Madera M."/>
            <person name="Marchionni L."/>
            <person name="Matsuda H."/>
            <person name="Matsuzawa S."/>
            <person name="Miki H."/>
            <person name="Mignone F."/>
            <person name="Miyake S."/>
            <person name="Morris K."/>
            <person name="Mottagui-Tabar S."/>
            <person name="Mulder N."/>
            <person name="Nakano N."/>
            <person name="Nakauchi H."/>
            <person name="Ng P."/>
            <person name="Nilsson R."/>
            <person name="Nishiguchi S."/>
            <person name="Nishikawa S."/>
            <person name="Nori F."/>
            <person name="Ohara O."/>
            <person name="Okazaki Y."/>
            <person name="Orlando V."/>
            <person name="Pang K.C."/>
            <person name="Pavan W.J."/>
            <person name="Pavesi G."/>
            <person name="Pesole G."/>
            <person name="Petrovsky N."/>
            <person name="Piazza S."/>
            <person name="Reed J."/>
            <person name="Reid J.F."/>
            <person name="Ring B.Z."/>
            <person name="Ringwald M."/>
            <person name="Rost B."/>
            <person name="Ruan Y."/>
            <person name="Salzberg S.L."/>
            <person name="Sandelin A."/>
            <person name="Schneider C."/>
            <person name="Schoenbach C."/>
            <person name="Sekiguchi K."/>
            <person name="Semple C.A."/>
            <person name="Seno S."/>
            <person name="Sessa L."/>
            <person name="Sheng Y."/>
            <person name="Shibata Y."/>
            <person name="Shimada H."/>
            <person name="Shimada K."/>
            <person name="Silva D."/>
            <person name="Sinclair B."/>
            <person name="Sperling S."/>
            <person name="Stupka E."/>
            <person name="Sugiura K."/>
            <person name="Sultana R."/>
            <person name="Takenaka Y."/>
            <person name="Taki K."/>
            <person name="Tammoja K."/>
            <person name="Tan S.L."/>
            <person name="Tang S."/>
            <person name="Taylor M.S."/>
            <person name="Tegner J."/>
            <person name="Teichmann S.A."/>
            <person name="Ueda H.R."/>
            <person name="van Nimwegen E."/>
            <person name="Verardo R."/>
            <person name="Wei C.L."/>
            <person name="Yagi K."/>
            <person name="Yamanishi H."/>
            <person name="Zabarovsky E."/>
            <person name="Zhu S."/>
            <person name="Zimmer A."/>
            <person name="Hide W."/>
            <person name="Bult C."/>
            <person name="Grimmond S.M."/>
            <person name="Teasdale R.D."/>
            <person name="Liu E.T."/>
            <person name="Brusic V."/>
            <person name="Quackenbush J."/>
            <person name="Wahlestedt C."/>
            <person name="Mattick J.S."/>
            <person name="Hume D.A."/>
            <person name="Kai C."/>
            <person name="Sasaki D."/>
            <person name="Tomaru Y."/>
            <person name="Fukuda S."/>
            <person name="Kanamori-Katayama M."/>
            <person name="Suzuki M."/>
            <person name="Aoki J."/>
            <person name="Arakawa T."/>
            <person name="Iida J."/>
            <person name="Imamura K."/>
            <person name="Itoh M."/>
            <person name="Kato T."/>
            <person name="Kawaji H."/>
            <person name="Kawagashira N."/>
            <person name="Kawashima T."/>
            <person name="Kojima M."/>
            <person name="Kondo S."/>
            <person name="Konno H."/>
            <person name="Nakano K."/>
            <person name="Ninomiya N."/>
            <person name="Nishio T."/>
            <person name="Okada M."/>
            <person name="Plessy C."/>
            <person name="Shibata K."/>
            <person name="Shiraki T."/>
            <person name="Suzuki S."/>
            <person name="Tagami M."/>
            <person name="Waki K."/>
            <person name="Watahiki A."/>
            <person name="Okamura-Oho Y."/>
            <person name="Suzuki H."/>
            <person name="Kawai J."/>
            <person name="Hayashizaki Y."/>
        </authorList>
    </citation>
    <scope>NUCLEOTIDE SEQUENCE [LARGE SCALE MRNA]</scope>
    <source>
        <strain>C57BL/6J</strain>
        <tissue>Head</tissue>
    </source>
</reference>
<reference key="5">
    <citation type="journal article" date="2004" name="Genome Res.">
        <title>The status, quality, and expansion of the NIH full-length cDNA project: the Mammalian Gene Collection (MGC).</title>
        <authorList>
            <consortium name="The MGC Project Team"/>
        </authorList>
    </citation>
    <scope>NUCLEOTIDE SEQUENCE [LARGE SCALE MRNA]</scope>
    <source>
        <tissue>Mammary tumor</tissue>
    </source>
</reference>
<reference key="6">
    <citation type="journal article" date="2004" name="Gene">
        <title>Characterization of synectin expression and promoter activity.</title>
        <authorList>
            <person name="Zhang Y."/>
            <person name="Chittenden T."/>
            <person name="Simons M."/>
        </authorList>
    </citation>
    <scope>TISSUE SPECIFICITY</scope>
    <scope>DEVELOPMENTAL STAGE</scope>
</reference>
<reference key="7">
    <citation type="journal article" date="2010" name="Cell">
        <title>A tissue-specific atlas of mouse protein phosphorylation and expression.</title>
        <authorList>
            <person name="Huttlin E.L."/>
            <person name="Jedrychowski M.P."/>
            <person name="Elias J.E."/>
            <person name="Goswami T."/>
            <person name="Rad R."/>
            <person name="Beausoleil S.A."/>
            <person name="Villen J."/>
            <person name="Haas W."/>
            <person name="Sowa M.E."/>
            <person name="Gygi S.P."/>
        </authorList>
    </citation>
    <scope>IDENTIFICATION BY MASS SPECTROMETRY [LARGE SCALE ANALYSIS]</scope>
    <source>
        <tissue>Brain</tissue>
        <tissue>Heart</tissue>
        <tissue>Liver</tissue>
        <tissue>Lung</tissue>
        <tissue>Spleen</tissue>
        <tissue>Testis</tissue>
    </source>
</reference>
<keyword id="KW-0002">3D-structure</keyword>
<keyword id="KW-0963">Cytoplasm</keyword>
<keyword id="KW-0472">Membrane</keyword>
<keyword id="KW-0597">Phosphoprotein</keyword>
<keyword id="KW-1185">Reference proteome</keyword>